<accession>Q54PY7</accession>
<keyword id="KW-0472">Membrane</keyword>
<keyword id="KW-0496">Mitochondrion</keyword>
<keyword id="KW-0999">Mitochondrion inner membrane</keyword>
<keyword id="KW-1185">Reference proteome</keyword>
<keyword id="KW-0677">Repeat</keyword>
<keyword id="KW-0812">Transmembrane</keyword>
<keyword id="KW-1133">Transmembrane helix</keyword>
<keyword id="KW-0813">Transport</keyword>
<evidence type="ECO:0000250" key="1"/>
<evidence type="ECO:0000255" key="2"/>
<evidence type="ECO:0000305" key="3"/>
<reference key="1">
    <citation type="journal article" date="2005" name="Nature">
        <title>The genome of the social amoeba Dictyostelium discoideum.</title>
        <authorList>
            <person name="Eichinger L."/>
            <person name="Pachebat J.A."/>
            <person name="Gloeckner G."/>
            <person name="Rajandream M.A."/>
            <person name="Sucgang R."/>
            <person name="Berriman M."/>
            <person name="Song J."/>
            <person name="Olsen R."/>
            <person name="Szafranski K."/>
            <person name="Xu Q."/>
            <person name="Tunggal B."/>
            <person name="Kummerfeld S."/>
            <person name="Madera M."/>
            <person name="Konfortov B.A."/>
            <person name="Rivero F."/>
            <person name="Bankier A.T."/>
            <person name="Lehmann R."/>
            <person name="Hamlin N."/>
            <person name="Davies R."/>
            <person name="Gaudet P."/>
            <person name="Fey P."/>
            <person name="Pilcher K."/>
            <person name="Chen G."/>
            <person name="Saunders D."/>
            <person name="Sodergren E.J."/>
            <person name="Davis P."/>
            <person name="Kerhornou A."/>
            <person name="Nie X."/>
            <person name="Hall N."/>
            <person name="Anjard C."/>
            <person name="Hemphill L."/>
            <person name="Bason N."/>
            <person name="Farbrother P."/>
            <person name="Desany B."/>
            <person name="Just E."/>
            <person name="Morio T."/>
            <person name="Rost R."/>
            <person name="Churcher C.M."/>
            <person name="Cooper J."/>
            <person name="Haydock S."/>
            <person name="van Driessche N."/>
            <person name="Cronin A."/>
            <person name="Goodhead I."/>
            <person name="Muzny D.M."/>
            <person name="Mourier T."/>
            <person name="Pain A."/>
            <person name="Lu M."/>
            <person name="Harper D."/>
            <person name="Lindsay R."/>
            <person name="Hauser H."/>
            <person name="James K.D."/>
            <person name="Quiles M."/>
            <person name="Madan Babu M."/>
            <person name="Saito T."/>
            <person name="Buchrieser C."/>
            <person name="Wardroper A."/>
            <person name="Felder M."/>
            <person name="Thangavelu M."/>
            <person name="Johnson D."/>
            <person name="Knights A."/>
            <person name="Loulseged H."/>
            <person name="Mungall K.L."/>
            <person name="Oliver K."/>
            <person name="Price C."/>
            <person name="Quail M.A."/>
            <person name="Urushihara H."/>
            <person name="Hernandez J."/>
            <person name="Rabbinowitsch E."/>
            <person name="Steffen D."/>
            <person name="Sanders M."/>
            <person name="Ma J."/>
            <person name="Kohara Y."/>
            <person name="Sharp S."/>
            <person name="Simmonds M.N."/>
            <person name="Spiegler S."/>
            <person name="Tivey A."/>
            <person name="Sugano S."/>
            <person name="White B."/>
            <person name="Walker D."/>
            <person name="Woodward J.R."/>
            <person name="Winckler T."/>
            <person name="Tanaka Y."/>
            <person name="Shaulsky G."/>
            <person name="Schleicher M."/>
            <person name="Weinstock G.M."/>
            <person name="Rosenthal A."/>
            <person name="Cox E.C."/>
            <person name="Chisholm R.L."/>
            <person name="Gibbs R.A."/>
            <person name="Loomis W.F."/>
            <person name="Platzer M."/>
            <person name="Kay R.R."/>
            <person name="Williams J.G."/>
            <person name="Dear P.H."/>
            <person name="Noegel A.A."/>
            <person name="Barrell B.G."/>
            <person name="Kuspa A."/>
        </authorList>
    </citation>
    <scope>NUCLEOTIDE SEQUENCE [LARGE SCALE GENOMIC DNA]</scope>
    <source>
        <strain>AX4</strain>
    </source>
</reference>
<reference key="2">
    <citation type="journal article" date="2007" name="Biochimie">
        <title>Mitochondrial carrier family: repertoire and peculiarities of the cellular slime mould Dictyostelium discoideum.</title>
        <authorList>
            <person name="Satre M."/>
            <person name="Mattei S."/>
            <person name="Aubry L."/>
            <person name="Gaudet P."/>
            <person name="Pelosi L."/>
            <person name="Brandolin G."/>
            <person name="Klein G."/>
        </authorList>
    </citation>
    <scope>REVIEW</scope>
</reference>
<feature type="chain" id="PRO_0000328692" description="Probable mitochondrial 2-oxoglutarate/malate carrier protein">
    <location>
        <begin position="1"/>
        <end position="318"/>
    </location>
</feature>
<feature type="transmembrane region" description="Helical; Name=1" evidence="2">
    <location>
        <begin position="28"/>
        <end position="48"/>
    </location>
</feature>
<feature type="transmembrane region" description="Helical; Name=2" evidence="2">
    <location>
        <begin position="79"/>
        <end position="99"/>
    </location>
</feature>
<feature type="transmembrane region" description="Helical; Name=3" evidence="2">
    <location>
        <begin position="125"/>
        <end position="145"/>
    </location>
</feature>
<feature type="transmembrane region" description="Helical; Name=4" evidence="2">
    <location>
        <begin position="185"/>
        <end position="205"/>
    </location>
</feature>
<feature type="transmembrane region" description="Helical; Name=5" evidence="2">
    <location>
        <begin position="225"/>
        <end position="245"/>
    </location>
</feature>
<feature type="transmembrane region" description="Helical; Name=6" evidence="2">
    <location>
        <begin position="281"/>
        <end position="301"/>
    </location>
</feature>
<feature type="repeat" description="Solcar 1">
    <location>
        <begin position="22"/>
        <end position="111"/>
    </location>
</feature>
<feature type="repeat" description="Solcar 2">
    <location>
        <begin position="119"/>
        <end position="210"/>
    </location>
</feature>
<feature type="repeat" description="Solcar 3">
    <location>
        <begin position="219"/>
        <end position="309"/>
    </location>
</feature>
<gene>
    <name type="primary">ucpC</name>
    <name type="synonym">slc25a11</name>
    <name type="ORF">DDB_G0284225</name>
</gene>
<proteinExistence type="inferred from homology"/>
<organism>
    <name type="scientific">Dictyostelium discoideum</name>
    <name type="common">Social amoeba</name>
    <dbReference type="NCBI Taxonomy" id="44689"/>
    <lineage>
        <taxon>Eukaryota</taxon>
        <taxon>Amoebozoa</taxon>
        <taxon>Evosea</taxon>
        <taxon>Eumycetozoa</taxon>
        <taxon>Dictyostelia</taxon>
        <taxon>Dictyosteliales</taxon>
        <taxon>Dictyosteliaceae</taxon>
        <taxon>Dictyostelium</taxon>
    </lineage>
</organism>
<comment type="function">
    <text evidence="1">Mitochondrial solute carriers shuttle metabolites, nucleotides, and cofactors through the mitochondrial inner membrane. Catalyzes the transport of 2-oxoglutarate across the inner mitochondrial membrane in an electroneutral exchange for malate or other dicarboxylic acids, and plays an important role in several metabolic processes, including the malate-aspartate shuttle, the oxoglutarate/isocitrate shuttle, in gluconeogenesis from lactate, and in nitrogen metabolism (By similarity).</text>
</comment>
<comment type="subcellular location">
    <subcellularLocation>
        <location evidence="1">Mitochondrion inner membrane</location>
        <topology evidence="1">Multi-pass membrane protein</topology>
    </subcellularLocation>
</comment>
<comment type="similarity">
    <text evidence="3">Belongs to the mitochondrial carrier (TC 2.A.29) family.</text>
</comment>
<protein>
    <recommendedName>
        <fullName>Probable mitochondrial 2-oxoglutarate/malate carrier protein</fullName>
        <shortName>OGCP</shortName>
    </recommendedName>
    <alternativeName>
        <fullName>Mitochondrial substrate carrier family protein ucpC</fullName>
    </alternativeName>
    <alternativeName>
        <fullName>Solute carrier family 25 member 11 homolog</fullName>
    </alternativeName>
</protein>
<dbReference type="EMBL" id="AAFI02000064">
    <property type="protein sequence ID" value="EAL65301.1"/>
    <property type="molecule type" value="Genomic_DNA"/>
</dbReference>
<dbReference type="RefSeq" id="XP_638658.1">
    <property type="nucleotide sequence ID" value="XM_633566.1"/>
</dbReference>
<dbReference type="SMR" id="Q54PY7"/>
<dbReference type="FunCoup" id="Q54PY7">
    <property type="interactions" value="591"/>
</dbReference>
<dbReference type="STRING" id="44689.Q54PY7"/>
<dbReference type="GlyGen" id="Q54PY7">
    <property type="glycosylation" value="1 site"/>
</dbReference>
<dbReference type="PaxDb" id="44689-DDB0234071"/>
<dbReference type="EnsemblProtists" id="EAL65301">
    <property type="protein sequence ID" value="EAL65301"/>
    <property type="gene ID" value="DDB_G0284225"/>
</dbReference>
<dbReference type="GeneID" id="8624487"/>
<dbReference type="KEGG" id="ddi:DDB_G0284225"/>
<dbReference type="dictyBase" id="DDB_G0284225">
    <property type="gene designation" value="ucpC"/>
</dbReference>
<dbReference type="VEuPathDB" id="AmoebaDB:DDB_G0284225"/>
<dbReference type="eggNOG" id="KOG0759">
    <property type="taxonomic scope" value="Eukaryota"/>
</dbReference>
<dbReference type="HOGENOM" id="CLU_015166_14_1_1"/>
<dbReference type="InParanoid" id="Q54PY7"/>
<dbReference type="OMA" id="SMPFDIT"/>
<dbReference type="PhylomeDB" id="Q54PY7"/>
<dbReference type="Reactome" id="R-DDI-1614517">
    <property type="pathway name" value="Sulfide oxidation to sulfate"/>
</dbReference>
<dbReference type="Reactome" id="R-DDI-428643">
    <property type="pathway name" value="Organic anion transporters"/>
</dbReference>
<dbReference type="PRO" id="PR:Q54PY7"/>
<dbReference type="Proteomes" id="UP000002195">
    <property type="component" value="Chromosome 4"/>
</dbReference>
<dbReference type="GO" id="GO:0005743">
    <property type="term" value="C:mitochondrial inner membrane"/>
    <property type="evidence" value="ECO:0007669"/>
    <property type="project" value="UniProtKB-SubCell"/>
</dbReference>
<dbReference type="GO" id="GO:0005739">
    <property type="term" value="C:mitochondrion"/>
    <property type="evidence" value="ECO:0000250"/>
    <property type="project" value="dictyBase"/>
</dbReference>
<dbReference type="GO" id="GO:0005310">
    <property type="term" value="F:dicarboxylic acid transmembrane transporter activity"/>
    <property type="evidence" value="ECO:0000250"/>
    <property type="project" value="dictyBase"/>
</dbReference>
<dbReference type="GO" id="GO:0015140">
    <property type="term" value="F:malate transmembrane transporter activity"/>
    <property type="evidence" value="ECO:0000318"/>
    <property type="project" value="GO_Central"/>
</dbReference>
<dbReference type="GO" id="GO:0015131">
    <property type="term" value="F:oxaloacetate transmembrane transporter activity"/>
    <property type="evidence" value="ECO:0000318"/>
    <property type="project" value="GO_Central"/>
</dbReference>
<dbReference type="GO" id="GO:0015141">
    <property type="term" value="F:succinate transmembrane transporter activity"/>
    <property type="evidence" value="ECO:0000318"/>
    <property type="project" value="GO_Central"/>
</dbReference>
<dbReference type="GO" id="GO:0015116">
    <property type="term" value="F:sulfate transmembrane transporter activity"/>
    <property type="evidence" value="ECO:0000318"/>
    <property type="project" value="GO_Central"/>
</dbReference>
<dbReference type="GO" id="GO:0015117">
    <property type="term" value="F:thiosulfate transmembrane transporter activity"/>
    <property type="evidence" value="ECO:0000318"/>
    <property type="project" value="GO_Central"/>
</dbReference>
<dbReference type="GO" id="GO:0006835">
    <property type="term" value="P:dicarboxylic acid transport"/>
    <property type="evidence" value="ECO:0000250"/>
    <property type="project" value="dictyBase"/>
</dbReference>
<dbReference type="GO" id="GO:0071423">
    <property type="term" value="P:malate transmembrane transport"/>
    <property type="evidence" value="ECO:0000318"/>
    <property type="project" value="GO_Central"/>
</dbReference>
<dbReference type="GO" id="GO:0015729">
    <property type="term" value="P:oxaloacetate transport"/>
    <property type="evidence" value="ECO:0000318"/>
    <property type="project" value="GO_Central"/>
</dbReference>
<dbReference type="GO" id="GO:0035435">
    <property type="term" value="P:phosphate ion transmembrane transport"/>
    <property type="evidence" value="ECO:0000318"/>
    <property type="project" value="GO_Central"/>
</dbReference>
<dbReference type="GO" id="GO:0071422">
    <property type="term" value="P:succinate transmembrane transport"/>
    <property type="evidence" value="ECO:0000318"/>
    <property type="project" value="GO_Central"/>
</dbReference>
<dbReference type="GO" id="GO:1902358">
    <property type="term" value="P:sulfate transmembrane transport"/>
    <property type="evidence" value="ECO:0000318"/>
    <property type="project" value="GO_Central"/>
</dbReference>
<dbReference type="GO" id="GO:0015709">
    <property type="term" value="P:thiosulfate transport"/>
    <property type="evidence" value="ECO:0000318"/>
    <property type="project" value="GO_Central"/>
</dbReference>
<dbReference type="FunFam" id="1.50.40.10:FF:000300">
    <property type="entry name" value="Probable mitochondrial 2-oxoglutarate/malate carrier protein"/>
    <property type="match status" value="1"/>
</dbReference>
<dbReference type="Gene3D" id="1.50.40.10">
    <property type="entry name" value="Mitochondrial carrier domain"/>
    <property type="match status" value="1"/>
</dbReference>
<dbReference type="InterPro" id="IPR002067">
    <property type="entry name" value="Mit_carrier"/>
</dbReference>
<dbReference type="InterPro" id="IPR050391">
    <property type="entry name" value="Mito_Metabolite_Transporter"/>
</dbReference>
<dbReference type="InterPro" id="IPR018108">
    <property type="entry name" value="Mitochondrial_sb/sol_carrier"/>
</dbReference>
<dbReference type="InterPro" id="IPR023395">
    <property type="entry name" value="Mt_carrier_dom_sf"/>
</dbReference>
<dbReference type="PANTHER" id="PTHR45618">
    <property type="entry name" value="MITOCHONDRIAL DICARBOXYLATE CARRIER-RELATED"/>
    <property type="match status" value="1"/>
</dbReference>
<dbReference type="Pfam" id="PF00153">
    <property type="entry name" value="Mito_carr"/>
    <property type="match status" value="3"/>
</dbReference>
<dbReference type="PRINTS" id="PR00926">
    <property type="entry name" value="MITOCARRIER"/>
</dbReference>
<dbReference type="SUPFAM" id="SSF103506">
    <property type="entry name" value="Mitochondrial carrier"/>
    <property type="match status" value="1"/>
</dbReference>
<dbReference type="PROSITE" id="PS50920">
    <property type="entry name" value="SOLCAR"/>
    <property type="match status" value="3"/>
</dbReference>
<sequence length="318" mass="35203">MSSFNTQNKNVLQTPIPAPTPQSQLKQFVIGGLAGMLSSAFTHPIDSLKVRMQLQGEGTGVGPKRGALKMLVHINQTEGFFTLYKGLSASLLRQATYTTTRFGLYDLIKDIVAKDDKPLPFTQKIMVGMLSGAGGAIVGTPADLTMVRMQADGKLPFNLRRNYKNVFDGIFRISKEEGIISLWKGCSPNLIRAMFMTAGQVSSYDQTKQLMLASGYFHDDIKTHLIASTTAAFVAAVATSPLDVIKTRIMNSPKTVTGELQYKGTFDCLSKTLRAEGFKAFYKGFNPYFMRLGPQTILTFIFVEQLNILWKKSQSYFK</sequence>
<name>M2OM_DICDI</name>